<sequence length="1126" mass="125828">MNADAQSTDASLSMREPLSHASIQEMLRRVVEKQAADDTTAIGKVFSEAGRAYAQDALPSDKGEVLKISFSLDATQQNILRANFPGRRTVFSNSSSSSHCFAAAHRLLETDFVYRCFGNTVDSIIDLGGNFVSHMKVKRHNVHCCCPILDARDGARLTERILSLKSYVRKHPEIVGEADYCMDTFQKCSRRADYAFAIHSTSDLDVGELACSLDQKGVMKFICTMMVDADMLIHNEGEIPNFNVRWEIDRKKDLIHFDFIDEPNLGYSHRFSLLKHYLTYNAVDLGHAAYRIERKQDFGGVMVIDLTYSLGFVPKMPHSNGRSCAWYNRVKGQMVVHTVNEGYYHHSYQTAVRRKVLVDKKVLTRVTEVAFRQFRPNADAHSAIQSIATMLSSSTNHTIIGGVTLISGKPLSPDDYIPVATTIYYRVKKLYNAIPEMLSLLDKGERLSTDAVLKGSEGPMWYSGPTFLSALDKVNVPGDFVAKALLSLPKRDLKSLFSRSATSHSERTPVRDESPIRCTDGVFYPIRMLLKCLGSDKFESVTITDPRSNTETTVDLYQSFQKKIETVFSFILGKIDGPSPLISDPVYFQSLEDVYYAEWHQGNAIDASNYARTLLDDIRKQKEESLKAKAKEVEDAQKLNRAILQVHAYLEAHPDGGKIEGLGLSSQFIAKIPELAIPTPKPLPEFEKNAETGEILRINPHSDAILEAIDYLKSTSANSIITLNKLGDHCQWTTKGLDVVWAGDDKRRAFIPKKNTWVGPTARSYPLAKYERAMSKDGYVTLRWDGEVLDANCVRSLSQYEIVFVDQSCVFASAEAIIPSLEKALGLEAHFSVTIVDGVAGCGKTTNIKQIARSSGRDVDLILTSNRSSADELKETIDCSPLTKLHYIRTCDSYLMSASAVKAQRLIFDECFLQHAGLVYAAATLAGCSEVIGFGDTEQIPFVSRNPSFVFRHHKLTGKVERKLITWRSPADATYCLEKYFYKNKKPVKTNSRVLRSIEVVPINSPVSVERNTNALYLCHTQAEKAVLKAQTHLKGCDNIFTTHEAQGKTFDNVYFCRLTRTSTSLATGRDPINGPCNGLVALSRHKKTFKYFTIAHDSDDVIYNACRDAGNTDDSILARSYNHNF</sequence>
<organism>
    <name type="scientific">Alfalfa mosaic virus</name>
    <name type="common">AMV</name>
    <dbReference type="NCBI Taxonomy" id="12321"/>
    <lineage>
        <taxon>Viruses</taxon>
        <taxon>Riboviria</taxon>
        <taxon>Orthornavirae</taxon>
        <taxon>Kitrinoviricota</taxon>
        <taxon>Alsuviricetes</taxon>
        <taxon>Martellivirales</taxon>
        <taxon>Bromoviridae</taxon>
        <taxon>Alfamovirus</taxon>
    </lineage>
</organism>
<proteinExistence type="inferred from homology"/>
<reference key="1">
    <citation type="journal article" date="1983" name="Nucleic Acids Res.">
        <title>Complete nucleotide sequence of alfalfa mosaic virus RNA 1.</title>
        <authorList>
            <person name="Cornelissen B.J.C."/>
            <person name="Brederode F.T."/>
            <person name="Moormann R.J.M."/>
            <person name="Bol J.F."/>
        </authorList>
    </citation>
    <scope>NUCLEOTIDE SEQUENCE [GENOMIC RNA]</scope>
    <source>
        <strain>strain 425 / isolate Leiden</strain>
    </source>
</reference>
<accession>P03589</accession>
<feature type="chain" id="PRO_0000083254" description="Replication protein 1a">
    <location>
        <begin position="1"/>
        <end position="1126"/>
    </location>
</feature>
<feature type="domain" description="Alphavirus-like MT" evidence="3">
    <location>
        <begin position="90"/>
        <end position="278"/>
    </location>
</feature>
<feature type="domain" description="(+)RNA virus helicase ATP-binding">
    <location>
        <begin position="806"/>
        <end position="963"/>
    </location>
</feature>
<feature type="domain" description="(+)RNA virus helicase C-terminal">
    <location>
        <begin position="964"/>
        <end position="1125"/>
    </location>
</feature>
<feature type="region of interest" description="Methyltransferase">
    <location>
        <begin position="69"/>
        <end position="406"/>
    </location>
</feature>
<feature type="region of interest" description="ATP-dependent helicase">
    <location>
        <begin position="834"/>
        <end position="1094"/>
    </location>
</feature>
<feature type="binding site" evidence="2">
    <location>
        <begin position="838"/>
        <end position="845"/>
    </location>
    <ligand>
        <name>ATP</name>
        <dbReference type="ChEBI" id="CHEBI:30616"/>
    </ligand>
</feature>
<name>1A_AMV</name>
<comment type="function">
    <text evidence="1">Involved in the virus replication. Contains a helicase domain and a methyltransferase domain. The methyltransferase domain is probably involved in viral RNA capping. Involved in the formation of ER membrane spherular invaginations in which RNA replication complexes form (By similarity).</text>
</comment>
<comment type="subunit">
    <text evidence="1">Interacts with RNA-directed RNA polymerase 2a.</text>
</comment>
<comment type="subcellular location">
    <subcellularLocation>
        <location evidence="1">Host endoplasmic reticulum membrane</location>
        <topology evidence="1">Peripheral membrane protein</topology>
    </subcellularLocation>
</comment>
<comment type="similarity">
    <text evidence="4">Belongs to the bromoviridae replication protein 1a family.</text>
</comment>
<keyword id="KW-0067">ATP-binding</keyword>
<keyword id="KW-0347">Helicase</keyword>
<keyword id="KW-1038">Host endoplasmic reticulum</keyword>
<keyword id="KW-1043">Host membrane</keyword>
<keyword id="KW-0378">Hydrolase</keyword>
<keyword id="KW-0472">Membrane</keyword>
<keyword id="KW-0489">Methyltransferase</keyword>
<keyword id="KW-0547">Nucleotide-binding</keyword>
<keyword id="KW-1185">Reference proteome</keyword>
<keyword id="KW-0808">Transferase</keyword>
<protein>
    <recommendedName>
        <fullName>Replication protein 1a</fullName>
    </recommendedName>
    <domain>
        <recommendedName>
            <fullName>ATP-dependent helicase</fullName>
            <ecNumber>3.6.4.-</ecNumber>
        </recommendedName>
    </domain>
    <domain>
        <recommendedName>
            <fullName>Methyltransferase</fullName>
            <ecNumber>2.1.1.-</ecNumber>
        </recommendedName>
    </domain>
</protein>
<evidence type="ECO:0000250" key="1"/>
<evidence type="ECO:0000255" key="2"/>
<evidence type="ECO:0000255" key="3">
    <source>
        <dbReference type="PROSITE-ProRule" id="PRU01079"/>
    </source>
</evidence>
<evidence type="ECO:0000305" key="4"/>
<dbReference type="EC" id="3.6.4.-"/>
<dbReference type="EC" id="2.1.1.-"/>
<dbReference type="EMBL" id="L00163">
    <property type="protein sequence ID" value="AAA46289.1"/>
    <property type="molecule type" value="Genomic_RNA"/>
</dbReference>
<dbReference type="PIR" id="A04197">
    <property type="entry name" value="WMFM12"/>
</dbReference>
<dbReference type="RefSeq" id="NP_041192.1">
    <property type="nucleotide sequence ID" value="NC_001495.1"/>
</dbReference>
<dbReference type="SMR" id="P03589"/>
<dbReference type="KEGG" id="vg:962667"/>
<dbReference type="Proteomes" id="UP000000358">
    <property type="component" value="Genome"/>
</dbReference>
<dbReference type="GO" id="GO:0044167">
    <property type="term" value="C:host cell endoplasmic reticulum membrane"/>
    <property type="evidence" value="ECO:0007669"/>
    <property type="project" value="UniProtKB-SubCell"/>
</dbReference>
<dbReference type="GO" id="GO:0016020">
    <property type="term" value="C:membrane"/>
    <property type="evidence" value="ECO:0007669"/>
    <property type="project" value="UniProtKB-KW"/>
</dbReference>
<dbReference type="GO" id="GO:0005524">
    <property type="term" value="F:ATP binding"/>
    <property type="evidence" value="ECO:0007669"/>
    <property type="project" value="UniProtKB-KW"/>
</dbReference>
<dbReference type="GO" id="GO:0004386">
    <property type="term" value="F:helicase activity"/>
    <property type="evidence" value="ECO:0007669"/>
    <property type="project" value="UniProtKB-KW"/>
</dbReference>
<dbReference type="GO" id="GO:0016787">
    <property type="term" value="F:hydrolase activity"/>
    <property type="evidence" value="ECO:0007669"/>
    <property type="project" value="UniProtKB-KW"/>
</dbReference>
<dbReference type="GO" id="GO:0008174">
    <property type="term" value="F:mRNA methyltransferase activity"/>
    <property type="evidence" value="ECO:0007669"/>
    <property type="project" value="InterPro"/>
</dbReference>
<dbReference type="GO" id="GO:0003723">
    <property type="term" value="F:RNA binding"/>
    <property type="evidence" value="ECO:0007669"/>
    <property type="project" value="InterPro"/>
</dbReference>
<dbReference type="GO" id="GO:0032259">
    <property type="term" value="P:methylation"/>
    <property type="evidence" value="ECO:0007669"/>
    <property type="project" value="UniProtKB-KW"/>
</dbReference>
<dbReference type="GO" id="GO:0016556">
    <property type="term" value="P:mRNA modification"/>
    <property type="evidence" value="ECO:0007669"/>
    <property type="project" value="InterPro"/>
</dbReference>
<dbReference type="GO" id="GO:0006396">
    <property type="term" value="P:RNA processing"/>
    <property type="evidence" value="ECO:0007669"/>
    <property type="project" value="InterPro"/>
</dbReference>
<dbReference type="Gene3D" id="3.40.50.300">
    <property type="entry name" value="P-loop containing nucleotide triphosphate hydrolases"/>
    <property type="match status" value="2"/>
</dbReference>
<dbReference type="InterPro" id="IPR027351">
    <property type="entry name" value="(+)RNA_virus_helicase_core_dom"/>
</dbReference>
<dbReference type="InterPro" id="IPR002588">
    <property type="entry name" value="Alphavirus-like_MT_dom"/>
</dbReference>
<dbReference type="InterPro" id="IPR027417">
    <property type="entry name" value="P-loop_NTPase"/>
</dbReference>
<dbReference type="Pfam" id="PF01443">
    <property type="entry name" value="Viral_helicase1"/>
    <property type="match status" value="1"/>
</dbReference>
<dbReference type="Pfam" id="PF01660">
    <property type="entry name" value="Vmethyltransf"/>
    <property type="match status" value="1"/>
</dbReference>
<dbReference type="SUPFAM" id="SSF52540">
    <property type="entry name" value="P-loop containing nucleoside triphosphate hydrolases"/>
    <property type="match status" value="1"/>
</dbReference>
<dbReference type="PROSITE" id="PS51743">
    <property type="entry name" value="ALPHAVIRUS_MT"/>
    <property type="match status" value="1"/>
</dbReference>
<dbReference type="PROSITE" id="PS51657">
    <property type="entry name" value="PSRV_HELICASE"/>
    <property type="match status" value="1"/>
</dbReference>
<gene>
    <name type="ORF">ORF1a</name>
</gene>